<accession>A1TUT0</accession>
<protein>
    <recommendedName>
        <fullName evidence="1">Glycine--tRNA ligase beta subunit</fullName>
        <ecNumber evidence="1">6.1.1.14</ecNumber>
    </recommendedName>
    <alternativeName>
        <fullName evidence="1">Glycyl-tRNA synthetase beta subunit</fullName>
        <shortName evidence="1">GlyRS</shortName>
    </alternativeName>
</protein>
<sequence length="708" mass="75937">MTHPNLLVELFVEELPPKALQKLGDAFAGVLLAQLQAQGLASAASRVTAYASPRRLAAHVTEVAPQAADKAVSQKLMPVTVGLDASGNATPALLKKLAALGADASAVPGLRRAPDGKAEALFLDSTVRGATLSEGLQKALQESVAKLPIPKVMRYQLSSGCEQPGWTSVSFVRPAHGLVALHGTEVLLSVSVLGLTAGNATHGHRFEAAVDPVVIRSADTYAQQLAEEGAVIAAFADRRAEIARQLQAAAEQVGGGVRPIQDDALLDEVTALVERPNVLVCEFEKQFLDVPQECLILTMKANQKYFPLLDAEGRLTHRFLVVSNIRPDDASAVVGGNERVVRPRLADAKFFFDQDRKKTLESRVASLAKVVYHNQLGTQGERVERVRAIARAIAQQIGDVELARQADQAAQLAKADLVTDMVGEFPELQGTMGRYYAQADGLPAEVADAIEDHYKPRFAGDTLPRGDVGVVVALADKLETLVGMFGIGNLPTGDRDPFALRRHALGVIRMLVEKELPLDLETLLHSALPAFGDKIQDPTASLADFIYDRLAGSLREQGYSAQEVDAVLALRPQRLALVGKQLAAVRAFAALPEAPALAAANKRVTNILKKAGDVDAHVNPDLLREQAEKDLYAALQRFVPEADALFAAGDYTGSLQTLAVLRAPVDAFFDDVMVNAEELDLRLNRQGLLQSLHVAMNRVADLSRLAVA</sequence>
<name>SYGB_PARC0</name>
<comment type="catalytic activity">
    <reaction evidence="1">
        <text>tRNA(Gly) + glycine + ATP = glycyl-tRNA(Gly) + AMP + diphosphate</text>
        <dbReference type="Rhea" id="RHEA:16013"/>
        <dbReference type="Rhea" id="RHEA-COMP:9664"/>
        <dbReference type="Rhea" id="RHEA-COMP:9683"/>
        <dbReference type="ChEBI" id="CHEBI:30616"/>
        <dbReference type="ChEBI" id="CHEBI:33019"/>
        <dbReference type="ChEBI" id="CHEBI:57305"/>
        <dbReference type="ChEBI" id="CHEBI:78442"/>
        <dbReference type="ChEBI" id="CHEBI:78522"/>
        <dbReference type="ChEBI" id="CHEBI:456215"/>
        <dbReference type="EC" id="6.1.1.14"/>
    </reaction>
</comment>
<comment type="subunit">
    <text evidence="1">Tetramer of two alpha and two beta subunits.</text>
</comment>
<comment type="subcellular location">
    <subcellularLocation>
        <location evidence="1">Cytoplasm</location>
    </subcellularLocation>
</comment>
<comment type="similarity">
    <text evidence="1">Belongs to the class-II aminoacyl-tRNA synthetase family.</text>
</comment>
<gene>
    <name evidence="1" type="primary">glyS</name>
    <name type="ordered locus">Aave_4177</name>
</gene>
<evidence type="ECO:0000255" key="1">
    <source>
        <dbReference type="HAMAP-Rule" id="MF_00255"/>
    </source>
</evidence>
<reference key="1">
    <citation type="submission" date="2006-12" db="EMBL/GenBank/DDBJ databases">
        <title>Complete sequence of Acidovorax avenae subsp. citrulli AAC00-1.</title>
        <authorList>
            <person name="Copeland A."/>
            <person name="Lucas S."/>
            <person name="Lapidus A."/>
            <person name="Barry K."/>
            <person name="Detter J.C."/>
            <person name="Glavina del Rio T."/>
            <person name="Dalin E."/>
            <person name="Tice H."/>
            <person name="Pitluck S."/>
            <person name="Kiss H."/>
            <person name="Brettin T."/>
            <person name="Bruce D."/>
            <person name="Han C."/>
            <person name="Tapia R."/>
            <person name="Gilna P."/>
            <person name="Schmutz J."/>
            <person name="Larimer F."/>
            <person name="Land M."/>
            <person name="Hauser L."/>
            <person name="Kyrpides N."/>
            <person name="Kim E."/>
            <person name="Stahl D."/>
            <person name="Richardson P."/>
        </authorList>
    </citation>
    <scope>NUCLEOTIDE SEQUENCE [LARGE SCALE GENOMIC DNA]</scope>
    <source>
        <strain>AAC00-1</strain>
    </source>
</reference>
<organism>
    <name type="scientific">Paracidovorax citrulli (strain AAC00-1)</name>
    <name type="common">Acidovorax citrulli</name>
    <dbReference type="NCBI Taxonomy" id="397945"/>
    <lineage>
        <taxon>Bacteria</taxon>
        <taxon>Pseudomonadati</taxon>
        <taxon>Pseudomonadota</taxon>
        <taxon>Betaproteobacteria</taxon>
        <taxon>Burkholderiales</taxon>
        <taxon>Comamonadaceae</taxon>
        <taxon>Paracidovorax</taxon>
    </lineage>
</organism>
<dbReference type="EC" id="6.1.1.14" evidence="1"/>
<dbReference type="EMBL" id="CP000512">
    <property type="protein sequence ID" value="ABM34718.1"/>
    <property type="molecule type" value="Genomic_DNA"/>
</dbReference>
<dbReference type="RefSeq" id="WP_011797192.1">
    <property type="nucleotide sequence ID" value="NC_008752.1"/>
</dbReference>
<dbReference type="SMR" id="A1TUT0"/>
<dbReference type="STRING" id="397945.Aave_4177"/>
<dbReference type="KEGG" id="aav:Aave_4177"/>
<dbReference type="eggNOG" id="COG0751">
    <property type="taxonomic scope" value="Bacteria"/>
</dbReference>
<dbReference type="HOGENOM" id="CLU_007220_2_2_4"/>
<dbReference type="OrthoDB" id="9775440at2"/>
<dbReference type="Proteomes" id="UP000002596">
    <property type="component" value="Chromosome"/>
</dbReference>
<dbReference type="GO" id="GO:0005829">
    <property type="term" value="C:cytosol"/>
    <property type="evidence" value="ECO:0007669"/>
    <property type="project" value="TreeGrafter"/>
</dbReference>
<dbReference type="GO" id="GO:0004814">
    <property type="term" value="F:arginine-tRNA ligase activity"/>
    <property type="evidence" value="ECO:0007669"/>
    <property type="project" value="InterPro"/>
</dbReference>
<dbReference type="GO" id="GO:0005524">
    <property type="term" value="F:ATP binding"/>
    <property type="evidence" value="ECO:0007669"/>
    <property type="project" value="UniProtKB-UniRule"/>
</dbReference>
<dbReference type="GO" id="GO:0004820">
    <property type="term" value="F:glycine-tRNA ligase activity"/>
    <property type="evidence" value="ECO:0007669"/>
    <property type="project" value="UniProtKB-UniRule"/>
</dbReference>
<dbReference type="GO" id="GO:0006420">
    <property type="term" value="P:arginyl-tRNA aminoacylation"/>
    <property type="evidence" value="ECO:0007669"/>
    <property type="project" value="InterPro"/>
</dbReference>
<dbReference type="GO" id="GO:0006426">
    <property type="term" value="P:glycyl-tRNA aminoacylation"/>
    <property type="evidence" value="ECO:0007669"/>
    <property type="project" value="UniProtKB-UniRule"/>
</dbReference>
<dbReference type="HAMAP" id="MF_00255">
    <property type="entry name" value="Gly_tRNA_synth_beta"/>
    <property type="match status" value="1"/>
</dbReference>
<dbReference type="InterPro" id="IPR008909">
    <property type="entry name" value="DALR_anticod-bd"/>
</dbReference>
<dbReference type="InterPro" id="IPR015944">
    <property type="entry name" value="Gly-tRNA-synth_bsu"/>
</dbReference>
<dbReference type="InterPro" id="IPR006194">
    <property type="entry name" value="Gly-tRNA-synth_heterodimer"/>
</dbReference>
<dbReference type="NCBIfam" id="TIGR00211">
    <property type="entry name" value="glyS"/>
    <property type="match status" value="1"/>
</dbReference>
<dbReference type="PANTHER" id="PTHR30075:SF2">
    <property type="entry name" value="GLYCINE--TRNA LIGASE, CHLOROPLASTIC_MITOCHONDRIAL 2"/>
    <property type="match status" value="1"/>
</dbReference>
<dbReference type="PANTHER" id="PTHR30075">
    <property type="entry name" value="GLYCYL-TRNA SYNTHETASE"/>
    <property type="match status" value="1"/>
</dbReference>
<dbReference type="Pfam" id="PF05746">
    <property type="entry name" value="DALR_1"/>
    <property type="match status" value="1"/>
</dbReference>
<dbReference type="Pfam" id="PF02092">
    <property type="entry name" value="tRNA_synt_2f"/>
    <property type="match status" value="1"/>
</dbReference>
<dbReference type="PRINTS" id="PR01045">
    <property type="entry name" value="TRNASYNTHGB"/>
</dbReference>
<dbReference type="SUPFAM" id="SSF109604">
    <property type="entry name" value="HD-domain/PDEase-like"/>
    <property type="match status" value="1"/>
</dbReference>
<dbReference type="PROSITE" id="PS50861">
    <property type="entry name" value="AA_TRNA_LIGASE_II_GLYAB"/>
    <property type="match status" value="1"/>
</dbReference>
<keyword id="KW-0030">Aminoacyl-tRNA synthetase</keyword>
<keyword id="KW-0067">ATP-binding</keyword>
<keyword id="KW-0963">Cytoplasm</keyword>
<keyword id="KW-0436">Ligase</keyword>
<keyword id="KW-0547">Nucleotide-binding</keyword>
<keyword id="KW-0648">Protein biosynthesis</keyword>
<feature type="chain" id="PRO_1000101252" description="Glycine--tRNA ligase beta subunit">
    <location>
        <begin position="1"/>
        <end position="708"/>
    </location>
</feature>
<proteinExistence type="inferred from homology"/>